<protein>
    <recommendedName>
        <fullName evidence="1">Large-conductance mechanosensitive channel</fullName>
    </recommendedName>
</protein>
<name>MSCL_RALN1</name>
<accession>Q8XVA1</accession>
<gene>
    <name evidence="1" type="primary">mscL</name>
    <name type="ordered locus">RSc2930</name>
    <name type="ORF">RS00160</name>
</gene>
<reference key="1">
    <citation type="journal article" date="2002" name="Nature">
        <title>Genome sequence of the plant pathogen Ralstonia solanacearum.</title>
        <authorList>
            <person name="Salanoubat M."/>
            <person name="Genin S."/>
            <person name="Artiguenave F."/>
            <person name="Gouzy J."/>
            <person name="Mangenot S."/>
            <person name="Arlat M."/>
            <person name="Billault A."/>
            <person name="Brottier P."/>
            <person name="Camus J.-C."/>
            <person name="Cattolico L."/>
            <person name="Chandler M."/>
            <person name="Choisne N."/>
            <person name="Claudel-Renard C."/>
            <person name="Cunnac S."/>
            <person name="Demange N."/>
            <person name="Gaspin C."/>
            <person name="Lavie M."/>
            <person name="Moisan A."/>
            <person name="Robert C."/>
            <person name="Saurin W."/>
            <person name="Schiex T."/>
            <person name="Siguier P."/>
            <person name="Thebault P."/>
            <person name="Whalen M."/>
            <person name="Wincker P."/>
            <person name="Levy M."/>
            <person name="Weissenbach J."/>
            <person name="Boucher C.A."/>
        </authorList>
    </citation>
    <scope>NUCLEOTIDE SEQUENCE [LARGE SCALE GENOMIC DNA]</scope>
    <source>
        <strain>ATCC BAA-1114 / GMI1000</strain>
    </source>
</reference>
<proteinExistence type="inferred from homology"/>
<feature type="chain" id="PRO_0000238024" description="Large-conductance mechanosensitive channel">
    <location>
        <begin position="1"/>
        <end position="141"/>
    </location>
</feature>
<feature type="transmembrane region" description="Helical" evidence="1">
    <location>
        <begin position="16"/>
        <end position="36"/>
    </location>
</feature>
<feature type="transmembrane region" description="Helical" evidence="1">
    <location>
        <begin position="86"/>
        <end position="106"/>
    </location>
</feature>
<dbReference type="EMBL" id="AL646052">
    <property type="protein sequence ID" value="CAD16637.1"/>
    <property type="molecule type" value="Genomic_DNA"/>
</dbReference>
<dbReference type="RefSeq" id="WP_003263430.1">
    <property type="nucleotide sequence ID" value="NC_003295.1"/>
</dbReference>
<dbReference type="STRING" id="267608.RSc2930"/>
<dbReference type="EnsemblBacteria" id="CAD16637">
    <property type="protein sequence ID" value="CAD16637"/>
    <property type="gene ID" value="RSc2930"/>
</dbReference>
<dbReference type="GeneID" id="61362255"/>
<dbReference type="KEGG" id="rso:RSc2930"/>
<dbReference type="eggNOG" id="COG1970">
    <property type="taxonomic scope" value="Bacteria"/>
</dbReference>
<dbReference type="HOGENOM" id="CLU_095787_0_1_4"/>
<dbReference type="Proteomes" id="UP000001436">
    <property type="component" value="Chromosome"/>
</dbReference>
<dbReference type="GO" id="GO:0005886">
    <property type="term" value="C:plasma membrane"/>
    <property type="evidence" value="ECO:0007669"/>
    <property type="project" value="UniProtKB-SubCell"/>
</dbReference>
<dbReference type="GO" id="GO:0008381">
    <property type="term" value="F:mechanosensitive monoatomic ion channel activity"/>
    <property type="evidence" value="ECO:0007669"/>
    <property type="project" value="UniProtKB-UniRule"/>
</dbReference>
<dbReference type="Gene3D" id="1.10.1200.120">
    <property type="entry name" value="Large-conductance mechanosensitive channel, MscL, domain 1"/>
    <property type="match status" value="1"/>
</dbReference>
<dbReference type="HAMAP" id="MF_00115">
    <property type="entry name" value="MscL"/>
    <property type="match status" value="1"/>
</dbReference>
<dbReference type="InterPro" id="IPR019823">
    <property type="entry name" value="Mechanosensitive_channel_CS"/>
</dbReference>
<dbReference type="InterPro" id="IPR001185">
    <property type="entry name" value="MS_channel"/>
</dbReference>
<dbReference type="InterPro" id="IPR037673">
    <property type="entry name" value="MSC/AndL"/>
</dbReference>
<dbReference type="InterPro" id="IPR036019">
    <property type="entry name" value="MscL_channel"/>
</dbReference>
<dbReference type="NCBIfam" id="TIGR00220">
    <property type="entry name" value="mscL"/>
    <property type="match status" value="1"/>
</dbReference>
<dbReference type="NCBIfam" id="NF010557">
    <property type="entry name" value="PRK13952.1"/>
    <property type="match status" value="1"/>
</dbReference>
<dbReference type="PANTHER" id="PTHR30266:SF2">
    <property type="entry name" value="LARGE-CONDUCTANCE MECHANOSENSITIVE CHANNEL"/>
    <property type="match status" value="1"/>
</dbReference>
<dbReference type="PANTHER" id="PTHR30266">
    <property type="entry name" value="MECHANOSENSITIVE CHANNEL MSCL"/>
    <property type="match status" value="1"/>
</dbReference>
<dbReference type="Pfam" id="PF01741">
    <property type="entry name" value="MscL"/>
    <property type="match status" value="1"/>
</dbReference>
<dbReference type="PRINTS" id="PR01264">
    <property type="entry name" value="MECHCHANNEL"/>
</dbReference>
<dbReference type="SUPFAM" id="SSF81330">
    <property type="entry name" value="Gated mechanosensitive channel"/>
    <property type="match status" value="1"/>
</dbReference>
<dbReference type="PROSITE" id="PS01327">
    <property type="entry name" value="MSCL"/>
    <property type="match status" value="1"/>
</dbReference>
<comment type="function">
    <text evidence="1">Channel that opens in response to stretch forces in the membrane lipid bilayer. May participate in the regulation of osmotic pressure changes within the cell.</text>
</comment>
<comment type="subunit">
    <text evidence="1">Homopentamer.</text>
</comment>
<comment type="subcellular location">
    <subcellularLocation>
        <location evidence="1">Cell inner membrane</location>
        <topology evidence="1">Multi-pass membrane protein</topology>
    </subcellularLocation>
</comment>
<comment type="similarity">
    <text evidence="1">Belongs to the MscL family.</text>
</comment>
<organism>
    <name type="scientific">Ralstonia nicotianae (strain ATCC BAA-1114 / GMI1000)</name>
    <name type="common">Ralstonia solanacearum</name>
    <dbReference type="NCBI Taxonomy" id="267608"/>
    <lineage>
        <taxon>Bacteria</taxon>
        <taxon>Pseudomonadati</taxon>
        <taxon>Pseudomonadota</taxon>
        <taxon>Betaproteobacteria</taxon>
        <taxon>Burkholderiales</taxon>
        <taxon>Burkholderiaceae</taxon>
        <taxon>Ralstonia</taxon>
        <taxon>Ralstonia solanacearum species complex</taxon>
    </lineage>
</organism>
<evidence type="ECO:0000255" key="1">
    <source>
        <dbReference type="HAMAP-Rule" id="MF_00115"/>
    </source>
</evidence>
<keyword id="KW-0997">Cell inner membrane</keyword>
<keyword id="KW-1003">Cell membrane</keyword>
<keyword id="KW-0407">Ion channel</keyword>
<keyword id="KW-0406">Ion transport</keyword>
<keyword id="KW-0472">Membrane</keyword>
<keyword id="KW-1185">Reference proteome</keyword>
<keyword id="KW-0812">Transmembrane</keyword>
<keyword id="KW-1133">Transmembrane helix</keyword>
<keyword id="KW-0813">Transport</keyword>
<sequence length="141" mass="15299">MALMQDFKKFAMRGNVIDLAVGVIIGAAFGKIVDSLVNDLIMPLVARIVGKLDFSNLFIQLADAPAGVPQTLADLKKAGVPVFAYGNFITVAVNFLILAFIVFLMVRAITRVIDTNPPPADTPENTLLLRDIRDSLKSKNQ</sequence>